<gene>
    <name evidence="1" type="primary">rplN</name>
    <name type="ordered locus">EAT1b_1623</name>
</gene>
<dbReference type="EMBL" id="CP001615">
    <property type="protein sequence ID" value="ACQ70549.1"/>
    <property type="molecule type" value="Genomic_DNA"/>
</dbReference>
<dbReference type="RefSeq" id="WP_012727667.1">
    <property type="nucleotide sequence ID" value="NC_012673.1"/>
</dbReference>
<dbReference type="SMR" id="C4KZN6"/>
<dbReference type="STRING" id="360911.EAT1b_1623"/>
<dbReference type="GeneID" id="94370753"/>
<dbReference type="KEGG" id="eat:EAT1b_1623"/>
<dbReference type="eggNOG" id="COG0093">
    <property type="taxonomic scope" value="Bacteria"/>
</dbReference>
<dbReference type="HOGENOM" id="CLU_095071_2_1_9"/>
<dbReference type="OrthoDB" id="9806379at2"/>
<dbReference type="Proteomes" id="UP000000716">
    <property type="component" value="Chromosome"/>
</dbReference>
<dbReference type="GO" id="GO:0022625">
    <property type="term" value="C:cytosolic large ribosomal subunit"/>
    <property type="evidence" value="ECO:0007669"/>
    <property type="project" value="TreeGrafter"/>
</dbReference>
<dbReference type="GO" id="GO:0070180">
    <property type="term" value="F:large ribosomal subunit rRNA binding"/>
    <property type="evidence" value="ECO:0007669"/>
    <property type="project" value="TreeGrafter"/>
</dbReference>
<dbReference type="GO" id="GO:0003735">
    <property type="term" value="F:structural constituent of ribosome"/>
    <property type="evidence" value="ECO:0007669"/>
    <property type="project" value="InterPro"/>
</dbReference>
<dbReference type="GO" id="GO:0006412">
    <property type="term" value="P:translation"/>
    <property type="evidence" value="ECO:0007669"/>
    <property type="project" value="UniProtKB-UniRule"/>
</dbReference>
<dbReference type="CDD" id="cd00337">
    <property type="entry name" value="Ribosomal_uL14"/>
    <property type="match status" value="1"/>
</dbReference>
<dbReference type="FunFam" id="2.40.150.20:FF:000001">
    <property type="entry name" value="50S ribosomal protein L14"/>
    <property type="match status" value="1"/>
</dbReference>
<dbReference type="Gene3D" id="2.40.150.20">
    <property type="entry name" value="Ribosomal protein L14"/>
    <property type="match status" value="1"/>
</dbReference>
<dbReference type="HAMAP" id="MF_01367">
    <property type="entry name" value="Ribosomal_uL14"/>
    <property type="match status" value="1"/>
</dbReference>
<dbReference type="InterPro" id="IPR000218">
    <property type="entry name" value="Ribosomal_uL14"/>
</dbReference>
<dbReference type="InterPro" id="IPR005745">
    <property type="entry name" value="Ribosomal_uL14_bac-type"/>
</dbReference>
<dbReference type="InterPro" id="IPR019972">
    <property type="entry name" value="Ribosomal_uL14_CS"/>
</dbReference>
<dbReference type="InterPro" id="IPR036853">
    <property type="entry name" value="Ribosomal_uL14_sf"/>
</dbReference>
<dbReference type="NCBIfam" id="TIGR01067">
    <property type="entry name" value="rplN_bact"/>
    <property type="match status" value="1"/>
</dbReference>
<dbReference type="PANTHER" id="PTHR11761">
    <property type="entry name" value="50S/60S RIBOSOMAL PROTEIN L14/L23"/>
    <property type="match status" value="1"/>
</dbReference>
<dbReference type="PANTHER" id="PTHR11761:SF3">
    <property type="entry name" value="LARGE RIBOSOMAL SUBUNIT PROTEIN UL14M"/>
    <property type="match status" value="1"/>
</dbReference>
<dbReference type="Pfam" id="PF00238">
    <property type="entry name" value="Ribosomal_L14"/>
    <property type="match status" value="1"/>
</dbReference>
<dbReference type="SMART" id="SM01374">
    <property type="entry name" value="Ribosomal_L14"/>
    <property type="match status" value="1"/>
</dbReference>
<dbReference type="SUPFAM" id="SSF50193">
    <property type="entry name" value="Ribosomal protein L14"/>
    <property type="match status" value="1"/>
</dbReference>
<dbReference type="PROSITE" id="PS00049">
    <property type="entry name" value="RIBOSOMAL_L14"/>
    <property type="match status" value="1"/>
</dbReference>
<proteinExistence type="inferred from homology"/>
<evidence type="ECO:0000255" key="1">
    <source>
        <dbReference type="HAMAP-Rule" id="MF_01367"/>
    </source>
</evidence>
<evidence type="ECO:0000305" key="2"/>
<feature type="chain" id="PRO_1000214979" description="Large ribosomal subunit protein uL14">
    <location>
        <begin position="1"/>
        <end position="122"/>
    </location>
</feature>
<name>RL14_EXISA</name>
<sequence length="122" mass="13285">MIQQESRLKVADNSGARELLTIKVLGGSGRKTANIGDIIVATVKQATPGGVVKKGDVVRAVVVRTKRGARRKDGSYIRFDENAAVIIKDDKSPRGTRIFGPVARELREKEFMKIVSLAPEVL</sequence>
<protein>
    <recommendedName>
        <fullName evidence="1">Large ribosomal subunit protein uL14</fullName>
    </recommendedName>
    <alternativeName>
        <fullName evidence="2">50S ribosomal protein L14</fullName>
    </alternativeName>
</protein>
<keyword id="KW-0687">Ribonucleoprotein</keyword>
<keyword id="KW-0689">Ribosomal protein</keyword>
<keyword id="KW-0694">RNA-binding</keyword>
<keyword id="KW-0699">rRNA-binding</keyword>
<accession>C4KZN6</accession>
<reference key="1">
    <citation type="journal article" date="2011" name="J. Bacteriol.">
        <title>Complete genome sequence of the Thermophilic Bacterium Exiguobacterium sp. AT1b.</title>
        <authorList>
            <person name="Vishnivetskaya T.A."/>
            <person name="Lucas S."/>
            <person name="Copeland A."/>
            <person name="Lapidus A."/>
            <person name="Glavina del Rio T."/>
            <person name="Dalin E."/>
            <person name="Tice H."/>
            <person name="Bruce D.C."/>
            <person name="Goodwin L.A."/>
            <person name="Pitluck S."/>
            <person name="Saunders E."/>
            <person name="Brettin T."/>
            <person name="Detter C."/>
            <person name="Han C."/>
            <person name="Larimer F."/>
            <person name="Land M.L."/>
            <person name="Hauser L.J."/>
            <person name="Kyrpides N.C."/>
            <person name="Ovchinnikova G."/>
            <person name="Kathariou S."/>
            <person name="Ramaley R.F."/>
            <person name="Rodrigues D.F."/>
            <person name="Hendrix C."/>
            <person name="Richardson P."/>
            <person name="Tiedje J.M."/>
        </authorList>
    </citation>
    <scope>NUCLEOTIDE SEQUENCE [LARGE SCALE GENOMIC DNA]</scope>
    <source>
        <strain>ATCC BAA-1283 / AT1b</strain>
    </source>
</reference>
<comment type="function">
    <text evidence="1">Binds to 23S rRNA. Forms part of two intersubunit bridges in the 70S ribosome.</text>
</comment>
<comment type="subunit">
    <text evidence="1">Part of the 50S ribosomal subunit. Forms a cluster with proteins L3 and L19. In the 70S ribosome, L14 and L19 interact and together make contacts with the 16S rRNA in bridges B5 and B8.</text>
</comment>
<comment type="similarity">
    <text evidence="1">Belongs to the universal ribosomal protein uL14 family.</text>
</comment>
<organism>
    <name type="scientific">Exiguobacterium sp. (strain ATCC BAA-1283 / AT1b)</name>
    <dbReference type="NCBI Taxonomy" id="360911"/>
    <lineage>
        <taxon>Bacteria</taxon>
        <taxon>Bacillati</taxon>
        <taxon>Bacillota</taxon>
        <taxon>Bacilli</taxon>
        <taxon>Bacillales</taxon>
        <taxon>Bacillales Family XII. Incertae Sedis</taxon>
        <taxon>Exiguobacterium</taxon>
    </lineage>
</organism>